<sequence length="18" mass="2025">DLNKFEAEMRGEFGIXSA</sequence>
<evidence type="ECO:0000269" key="1">
    <source>
    </source>
</evidence>
<evidence type="ECO:0000303" key="2">
    <source>
    </source>
</evidence>
<evidence type="ECO:0000305" key="3"/>
<proteinExistence type="evidence at protein level"/>
<dbReference type="Proteomes" id="UP001155700">
    <property type="component" value="Unplaced"/>
</dbReference>
<dbReference type="GO" id="GO:0009543">
    <property type="term" value="C:chloroplast thylakoid lumen"/>
    <property type="evidence" value="ECO:0007669"/>
    <property type="project" value="UniProtKB-SubCell"/>
</dbReference>
<keyword id="KW-0150">Chloroplast</keyword>
<keyword id="KW-0903">Direct protein sequencing</keyword>
<keyword id="KW-0934">Plastid</keyword>
<keyword id="KW-1185">Reference proteome</keyword>
<keyword id="KW-0793">Thylakoid</keyword>
<accession>P85304</accession>
<reference evidence="3" key="1">
    <citation type="journal article" date="2002" name="J. Biol. Chem.">
        <title>Proteome map of the chloroplast lumen of Arabidopsis thaliana.</title>
        <authorList>
            <person name="Schubert M."/>
            <person name="Petersson U.A."/>
            <person name="Haas B.J."/>
            <person name="Funk C."/>
            <person name="Schroeder W.P."/>
            <person name="Kieselbach T."/>
        </authorList>
    </citation>
    <scope>PROTEIN SEQUENCE</scope>
    <scope>SUBCELLULAR LOCATION</scope>
    <source>
        <tissue evidence="1">Leaf</tissue>
    </source>
</reference>
<name>TL18_SPIOL</name>
<feature type="chain" id="PRO_0000308524" description="Thylakoid lumenal 18.3 kDa protein">
    <location>
        <begin position="1"/>
        <end position="18" status="greater than"/>
    </location>
</feature>
<feature type="non-terminal residue" evidence="2">
    <location>
        <position position="18"/>
    </location>
</feature>
<comment type="subcellular location">
    <subcellularLocation>
        <location evidence="1">Plastid</location>
        <location evidence="1">Chloroplast thylakoid lumen</location>
    </subcellularLocation>
</comment>
<organism>
    <name type="scientific">Spinacia oleracea</name>
    <name type="common">Spinach</name>
    <dbReference type="NCBI Taxonomy" id="3562"/>
    <lineage>
        <taxon>Eukaryota</taxon>
        <taxon>Viridiplantae</taxon>
        <taxon>Streptophyta</taxon>
        <taxon>Embryophyta</taxon>
        <taxon>Tracheophyta</taxon>
        <taxon>Spermatophyta</taxon>
        <taxon>Magnoliopsida</taxon>
        <taxon>eudicotyledons</taxon>
        <taxon>Gunneridae</taxon>
        <taxon>Pentapetalae</taxon>
        <taxon>Caryophyllales</taxon>
        <taxon>Chenopodiaceae</taxon>
        <taxon>Chenopodioideae</taxon>
        <taxon>Anserineae</taxon>
        <taxon>Spinacia</taxon>
    </lineage>
</organism>
<protein>
    <recommendedName>
        <fullName>Thylakoid lumenal 18.3 kDa protein</fullName>
    </recommendedName>
    <alternativeName>
        <fullName>P18.3</fullName>
    </alternativeName>
</protein>